<organism>
    <name type="scientific">Agrobacterium fabrum (strain C58 / ATCC 33970)</name>
    <name type="common">Agrobacterium tumefaciens (strain C58)</name>
    <dbReference type="NCBI Taxonomy" id="176299"/>
    <lineage>
        <taxon>Bacteria</taxon>
        <taxon>Pseudomonadati</taxon>
        <taxon>Pseudomonadota</taxon>
        <taxon>Alphaproteobacteria</taxon>
        <taxon>Hyphomicrobiales</taxon>
        <taxon>Rhizobiaceae</taxon>
        <taxon>Rhizobium/Agrobacterium group</taxon>
        <taxon>Agrobacterium</taxon>
        <taxon>Agrobacterium tumefaciens complex</taxon>
    </lineage>
</organism>
<sequence>MPKMKTKSAAKKRFKITATGKVVAAAAGKRHGMIKRTNKFIRDARGTMVLAEADGKKVVKNYLPNGL</sequence>
<protein>
    <recommendedName>
        <fullName evidence="1">Large ribosomal subunit protein bL35</fullName>
    </recommendedName>
    <alternativeName>
        <fullName evidence="2">50S ribosomal protein L35</fullName>
    </alternativeName>
</protein>
<name>RL35_AGRFC</name>
<keyword id="KW-1185">Reference proteome</keyword>
<keyword id="KW-0687">Ribonucleoprotein</keyword>
<keyword id="KW-0689">Ribosomal protein</keyword>
<dbReference type="EMBL" id="AE007869">
    <property type="protein sequence ID" value="AAK86071.1"/>
    <property type="molecule type" value="Genomic_DNA"/>
</dbReference>
<dbReference type="PIR" id="AG2607">
    <property type="entry name" value="AG2607"/>
</dbReference>
<dbReference type="PIR" id="F97389">
    <property type="entry name" value="F97389"/>
</dbReference>
<dbReference type="RefSeq" id="NP_353286.1">
    <property type="nucleotide sequence ID" value="NC_003062.2"/>
</dbReference>
<dbReference type="RefSeq" id="WP_003493355.1">
    <property type="nucleotide sequence ID" value="NC_003062.2"/>
</dbReference>
<dbReference type="SMR" id="Q8UIN8"/>
<dbReference type="STRING" id="176299.Atu0255"/>
<dbReference type="EnsemblBacteria" id="AAK86071">
    <property type="protein sequence ID" value="AAK86071"/>
    <property type="gene ID" value="Atu0255"/>
</dbReference>
<dbReference type="GeneID" id="97365819"/>
<dbReference type="KEGG" id="atu:Atu0255"/>
<dbReference type="PATRIC" id="fig|176299.10.peg.246"/>
<dbReference type="eggNOG" id="COG0291">
    <property type="taxonomic scope" value="Bacteria"/>
</dbReference>
<dbReference type="HOGENOM" id="CLU_169643_2_1_5"/>
<dbReference type="OrthoDB" id="9804851at2"/>
<dbReference type="PhylomeDB" id="Q8UIN8"/>
<dbReference type="BioCyc" id="AGRO:ATU0255-MONOMER"/>
<dbReference type="PRO" id="PR:Q8UIN8"/>
<dbReference type="Proteomes" id="UP000000813">
    <property type="component" value="Chromosome circular"/>
</dbReference>
<dbReference type="GO" id="GO:0022625">
    <property type="term" value="C:cytosolic large ribosomal subunit"/>
    <property type="evidence" value="ECO:0007669"/>
    <property type="project" value="TreeGrafter"/>
</dbReference>
<dbReference type="GO" id="GO:0003735">
    <property type="term" value="F:structural constituent of ribosome"/>
    <property type="evidence" value="ECO:0007669"/>
    <property type="project" value="InterPro"/>
</dbReference>
<dbReference type="GO" id="GO:0006412">
    <property type="term" value="P:translation"/>
    <property type="evidence" value="ECO:0007669"/>
    <property type="project" value="UniProtKB-UniRule"/>
</dbReference>
<dbReference type="FunFam" id="4.10.410.60:FF:000001">
    <property type="entry name" value="50S ribosomal protein L35"/>
    <property type="match status" value="1"/>
</dbReference>
<dbReference type="Gene3D" id="4.10.410.60">
    <property type="match status" value="1"/>
</dbReference>
<dbReference type="HAMAP" id="MF_00514">
    <property type="entry name" value="Ribosomal_bL35"/>
    <property type="match status" value="1"/>
</dbReference>
<dbReference type="InterPro" id="IPR001706">
    <property type="entry name" value="Ribosomal_bL35"/>
</dbReference>
<dbReference type="InterPro" id="IPR021137">
    <property type="entry name" value="Ribosomal_bL35-like"/>
</dbReference>
<dbReference type="InterPro" id="IPR018265">
    <property type="entry name" value="Ribosomal_bL35_CS"/>
</dbReference>
<dbReference type="InterPro" id="IPR037229">
    <property type="entry name" value="Ribosomal_bL35_sf"/>
</dbReference>
<dbReference type="NCBIfam" id="TIGR00001">
    <property type="entry name" value="rpmI_bact"/>
    <property type="match status" value="1"/>
</dbReference>
<dbReference type="PANTHER" id="PTHR33343">
    <property type="entry name" value="54S RIBOSOMAL PROTEIN BL35M"/>
    <property type="match status" value="1"/>
</dbReference>
<dbReference type="PANTHER" id="PTHR33343:SF1">
    <property type="entry name" value="LARGE RIBOSOMAL SUBUNIT PROTEIN BL35M"/>
    <property type="match status" value="1"/>
</dbReference>
<dbReference type="Pfam" id="PF01632">
    <property type="entry name" value="Ribosomal_L35p"/>
    <property type="match status" value="1"/>
</dbReference>
<dbReference type="PRINTS" id="PR00064">
    <property type="entry name" value="RIBOSOMALL35"/>
</dbReference>
<dbReference type="SUPFAM" id="SSF143034">
    <property type="entry name" value="L35p-like"/>
    <property type="match status" value="1"/>
</dbReference>
<dbReference type="PROSITE" id="PS00936">
    <property type="entry name" value="RIBOSOMAL_L35"/>
    <property type="match status" value="1"/>
</dbReference>
<feature type="chain" id="PRO_0000177316" description="Large ribosomal subunit protein bL35">
    <location>
        <begin position="1"/>
        <end position="67"/>
    </location>
</feature>
<gene>
    <name evidence="1" type="primary">rpmI</name>
    <name type="ordered locus">Atu0255</name>
    <name type="ORF">AGR_C_437</name>
</gene>
<comment type="similarity">
    <text evidence="1">Belongs to the bacterial ribosomal protein bL35 family.</text>
</comment>
<reference key="1">
    <citation type="journal article" date="2001" name="Science">
        <title>The genome of the natural genetic engineer Agrobacterium tumefaciens C58.</title>
        <authorList>
            <person name="Wood D.W."/>
            <person name="Setubal J.C."/>
            <person name="Kaul R."/>
            <person name="Monks D.E."/>
            <person name="Kitajima J.P."/>
            <person name="Okura V.K."/>
            <person name="Zhou Y."/>
            <person name="Chen L."/>
            <person name="Wood G.E."/>
            <person name="Almeida N.F. Jr."/>
            <person name="Woo L."/>
            <person name="Chen Y."/>
            <person name="Paulsen I.T."/>
            <person name="Eisen J.A."/>
            <person name="Karp P.D."/>
            <person name="Bovee D. Sr."/>
            <person name="Chapman P."/>
            <person name="Clendenning J."/>
            <person name="Deatherage G."/>
            <person name="Gillet W."/>
            <person name="Grant C."/>
            <person name="Kutyavin T."/>
            <person name="Levy R."/>
            <person name="Li M.-J."/>
            <person name="McClelland E."/>
            <person name="Palmieri A."/>
            <person name="Raymond C."/>
            <person name="Rouse G."/>
            <person name="Saenphimmachak C."/>
            <person name="Wu Z."/>
            <person name="Romero P."/>
            <person name="Gordon D."/>
            <person name="Zhang S."/>
            <person name="Yoo H."/>
            <person name="Tao Y."/>
            <person name="Biddle P."/>
            <person name="Jung M."/>
            <person name="Krespan W."/>
            <person name="Perry M."/>
            <person name="Gordon-Kamm B."/>
            <person name="Liao L."/>
            <person name="Kim S."/>
            <person name="Hendrick C."/>
            <person name="Zhao Z.-Y."/>
            <person name="Dolan M."/>
            <person name="Chumley F."/>
            <person name="Tingey S.V."/>
            <person name="Tomb J.-F."/>
            <person name="Gordon M.P."/>
            <person name="Olson M.V."/>
            <person name="Nester E.W."/>
        </authorList>
    </citation>
    <scope>NUCLEOTIDE SEQUENCE [LARGE SCALE GENOMIC DNA]</scope>
    <source>
        <strain>C58 / ATCC 33970</strain>
    </source>
</reference>
<reference key="2">
    <citation type="journal article" date="2001" name="Science">
        <title>Genome sequence of the plant pathogen and biotechnology agent Agrobacterium tumefaciens C58.</title>
        <authorList>
            <person name="Goodner B."/>
            <person name="Hinkle G."/>
            <person name="Gattung S."/>
            <person name="Miller N."/>
            <person name="Blanchard M."/>
            <person name="Qurollo B."/>
            <person name="Goldman B.S."/>
            <person name="Cao Y."/>
            <person name="Askenazi M."/>
            <person name="Halling C."/>
            <person name="Mullin L."/>
            <person name="Houmiel K."/>
            <person name="Gordon J."/>
            <person name="Vaudin M."/>
            <person name="Iartchouk O."/>
            <person name="Epp A."/>
            <person name="Liu F."/>
            <person name="Wollam C."/>
            <person name="Allinger M."/>
            <person name="Doughty D."/>
            <person name="Scott C."/>
            <person name="Lappas C."/>
            <person name="Markelz B."/>
            <person name="Flanagan C."/>
            <person name="Crowell C."/>
            <person name="Gurson J."/>
            <person name="Lomo C."/>
            <person name="Sear C."/>
            <person name="Strub G."/>
            <person name="Cielo C."/>
            <person name="Slater S."/>
        </authorList>
    </citation>
    <scope>NUCLEOTIDE SEQUENCE [LARGE SCALE GENOMIC DNA]</scope>
    <source>
        <strain>C58 / ATCC 33970</strain>
    </source>
</reference>
<accession>Q8UIN8</accession>
<evidence type="ECO:0000255" key="1">
    <source>
        <dbReference type="HAMAP-Rule" id="MF_00514"/>
    </source>
</evidence>
<evidence type="ECO:0000305" key="2"/>
<proteinExistence type="inferred from homology"/>